<accession>Q55EH8</accession>
<evidence type="ECO:0000255" key="1"/>
<evidence type="ECO:0000255" key="2">
    <source>
        <dbReference type="PROSITE-ProRule" id="PRU00434"/>
    </source>
</evidence>
<evidence type="ECO:0000305" key="3"/>
<reference key="1">
    <citation type="journal article" date="2005" name="Nature">
        <title>The genome of the social amoeba Dictyostelium discoideum.</title>
        <authorList>
            <person name="Eichinger L."/>
            <person name="Pachebat J.A."/>
            <person name="Gloeckner G."/>
            <person name="Rajandream M.A."/>
            <person name="Sucgang R."/>
            <person name="Berriman M."/>
            <person name="Song J."/>
            <person name="Olsen R."/>
            <person name="Szafranski K."/>
            <person name="Xu Q."/>
            <person name="Tunggal B."/>
            <person name="Kummerfeld S."/>
            <person name="Madera M."/>
            <person name="Konfortov B.A."/>
            <person name="Rivero F."/>
            <person name="Bankier A.T."/>
            <person name="Lehmann R."/>
            <person name="Hamlin N."/>
            <person name="Davies R."/>
            <person name="Gaudet P."/>
            <person name="Fey P."/>
            <person name="Pilcher K."/>
            <person name="Chen G."/>
            <person name="Saunders D."/>
            <person name="Sodergren E.J."/>
            <person name="Davis P."/>
            <person name="Kerhornou A."/>
            <person name="Nie X."/>
            <person name="Hall N."/>
            <person name="Anjard C."/>
            <person name="Hemphill L."/>
            <person name="Bason N."/>
            <person name="Farbrother P."/>
            <person name="Desany B."/>
            <person name="Just E."/>
            <person name="Morio T."/>
            <person name="Rost R."/>
            <person name="Churcher C.M."/>
            <person name="Cooper J."/>
            <person name="Haydock S."/>
            <person name="van Driessche N."/>
            <person name="Cronin A."/>
            <person name="Goodhead I."/>
            <person name="Muzny D.M."/>
            <person name="Mourier T."/>
            <person name="Pain A."/>
            <person name="Lu M."/>
            <person name="Harper D."/>
            <person name="Lindsay R."/>
            <person name="Hauser H."/>
            <person name="James K.D."/>
            <person name="Quiles M."/>
            <person name="Madan Babu M."/>
            <person name="Saito T."/>
            <person name="Buchrieser C."/>
            <person name="Wardroper A."/>
            <person name="Felder M."/>
            <person name="Thangavelu M."/>
            <person name="Johnson D."/>
            <person name="Knights A."/>
            <person name="Loulseged H."/>
            <person name="Mungall K.L."/>
            <person name="Oliver K."/>
            <person name="Price C."/>
            <person name="Quail M.A."/>
            <person name="Urushihara H."/>
            <person name="Hernandez J."/>
            <person name="Rabbinowitsch E."/>
            <person name="Steffen D."/>
            <person name="Sanders M."/>
            <person name="Ma J."/>
            <person name="Kohara Y."/>
            <person name="Sharp S."/>
            <person name="Simmonds M.N."/>
            <person name="Spiegler S."/>
            <person name="Tivey A."/>
            <person name="Sugano S."/>
            <person name="White B."/>
            <person name="Walker D."/>
            <person name="Woodward J.R."/>
            <person name="Winckler T."/>
            <person name="Tanaka Y."/>
            <person name="Shaulsky G."/>
            <person name="Schleicher M."/>
            <person name="Weinstock G.M."/>
            <person name="Rosenthal A."/>
            <person name="Cox E.C."/>
            <person name="Chisholm R.L."/>
            <person name="Gibbs R.A."/>
            <person name="Loomis W.F."/>
            <person name="Platzer M."/>
            <person name="Kay R.R."/>
            <person name="Williams J.G."/>
            <person name="Dear P.H."/>
            <person name="Noegel A.A."/>
            <person name="Barrell B.G."/>
            <person name="Kuspa A."/>
        </authorList>
    </citation>
    <scope>NUCLEOTIDE SEQUENCE [LARGE SCALE GENOMIC DNA]</scope>
    <source>
        <strain>AX4</strain>
    </source>
</reference>
<feature type="chain" id="PRO_0000391406" description="ABC transporter G family member 23">
    <location>
        <begin position="1"/>
        <end position="701"/>
    </location>
</feature>
<feature type="transmembrane region" description="Helical" evidence="1">
    <location>
        <begin position="335"/>
        <end position="355"/>
    </location>
</feature>
<feature type="transmembrane region" description="Helical" evidence="1">
    <location>
        <begin position="493"/>
        <end position="513"/>
    </location>
</feature>
<feature type="transmembrane region" description="Helical" evidence="1">
    <location>
        <begin position="541"/>
        <end position="561"/>
    </location>
</feature>
<feature type="transmembrane region" description="Helical" evidence="1">
    <location>
        <begin position="574"/>
        <end position="596"/>
    </location>
</feature>
<feature type="transmembrane region" description="Helical" evidence="1">
    <location>
        <begin position="608"/>
        <end position="628"/>
    </location>
</feature>
<feature type="transmembrane region" description="Helical" evidence="1">
    <location>
        <begin position="665"/>
        <end position="685"/>
    </location>
</feature>
<feature type="domain" description="ABC transporter" evidence="2">
    <location>
        <begin position="7"/>
        <end position="237"/>
    </location>
</feature>
<feature type="domain" description="ABC transmembrane type-2">
    <location>
        <begin position="459"/>
        <end position="686"/>
    </location>
</feature>
<feature type="binding site" evidence="2">
    <location>
        <begin position="39"/>
        <end position="46"/>
    </location>
    <ligand>
        <name>ATP</name>
        <dbReference type="ChEBI" id="CHEBI:30616"/>
    </ligand>
</feature>
<proteinExistence type="inferred from homology"/>
<keyword id="KW-0067">ATP-binding</keyword>
<keyword id="KW-0472">Membrane</keyword>
<keyword id="KW-0547">Nucleotide-binding</keyword>
<keyword id="KW-1185">Reference proteome</keyword>
<keyword id="KW-0812">Transmembrane</keyword>
<keyword id="KW-1133">Transmembrane helix</keyword>
<keyword id="KW-0813">Transport</keyword>
<gene>
    <name type="primary">abcG23</name>
    <name type="ORF">DDB_G0269026</name>
</gene>
<dbReference type="EMBL" id="AAFI02000004">
    <property type="protein sequence ID" value="EAL73102.2"/>
    <property type="molecule type" value="Genomic_DNA"/>
</dbReference>
<dbReference type="RefSeq" id="XP_647042.2">
    <property type="nucleotide sequence ID" value="XM_641950.2"/>
</dbReference>
<dbReference type="SMR" id="Q55EH8"/>
<dbReference type="FunCoup" id="Q55EH8">
    <property type="interactions" value="1"/>
</dbReference>
<dbReference type="STRING" id="44689.Q55EH8"/>
<dbReference type="PaxDb" id="44689-DDB0304677"/>
<dbReference type="EnsemblProtists" id="EAL73102">
    <property type="protein sequence ID" value="EAL73102"/>
    <property type="gene ID" value="DDB_G0269026"/>
</dbReference>
<dbReference type="GeneID" id="8616737"/>
<dbReference type="KEGG" id="ddi:DDB_G0269026"/>
<dbReference type="dictyBase" id="DDB_G0269026">
    <property type="gene designation" value="abcG23"/>
</dbReference>
<dbReference type="VEuPathDB" id="AmoebaDB:DDB_G0269026"/>
<dbReference type="eggNOG" id="KOG0059">
    <property type="taxonomic scope" value="Eukaryota"/>
</dbReference>
<dbReference type="HOGENOM" id="CLU_014367_1_0_1"/>
<dbReference type="InParanoid" id="Q55EH8"/>
<dbReference type="OMA" id="FRYNQAF"/>
<dbReference type="PhylomeDB" id="Q55EH8"/>
<dbReference type="PRO" id="PR:Q55EH8"/>
<dbReference type="Proteomes" id="UP000002195">
    <property type="component" value="Chromosome 1"/>
</dbReference>
<dbReference type="GO" id="GO:0005886">
    <property type="term" value="C:plasma membrane"/>
    <property type="evidence" value="ECO:0000318"/>
    <property type="project" value="GO_Central"/>
</dbReference>
<dbReference type="GO" id="GO:0140359">
    <property type="term" value="F:ABC-type transporter activity"/>
    <property type="evidence" value="ECO:0007669"/>
    <property type="project" value="InterPro"/>
</dbReference>
<dbReference type="GO" id="GO:0005524">
    <property type="term" value="F:ATP binding"/>
    <property type="evidence" value="ECO:0007669"/>
    <property type="project" value="UniProtKB-KW"/>
</dbReference>
<dbReference type="GO" id="GO:0016887">
    <property type="term" value="F:ATP hydrolysis activity"/>
    <property type="evidence" value="ECO:0007669"/>
    <property type="project" value="InterPro"/>
</dbReference>
<dbReference type="GO" id="GO:0030587">
    <property type="term" value="P:sorocarp development"/>
    <property type="evidence" value="ECO:0007669"/>
    <property type="project" value="UniProtKB-ARBA"/>
</dbReference>
<dbReference type="CDD" id="cd03230">
    <property type="entry name" value="ABC_DR_subfamily_A"/>
    <property type="match status" value="1"/>
</dbReference>
<dbReference type="Gene3D" id="3.40.1710.10">
    <property type="entry name" value="abc type-2 transporter like domain"/>
    <property type="match status" value="1"/>
</dbReference>
<dbReference type="Gene3D" id="3.40.50.300">
    <property type="entry name" value="P-loop containing nucleotide triphosphate hydrolases"/>
    <property type="match status" value="1"/>
</dbReference>
<dbReference type="InterPro" id="IPR003593">
    <property type="entry name" value="AAA+_ATPase"/>
</dbReference>
<dbReference type="InterPro" id="IPR013525">
    <property type="entry name" value="ABC2_TM"/>
</dbReference>
<dbReference type="InterPro" id="IPR003439">
    <property type="entry name" value="ABC_transporter-like_ATP-bd"/>
</dbReference>
<dbReference type="InterPro" id="IPR017871">
    <property type="entry name" value="ABC_transporter-like_CS"/>
</dbReference>
<dbReference type="InterPro" id="IPR027417">
    <property type="entry name" value="P-loop_NTPase"/>
</dbReference>
<dbReference type="PANTHER" id="PTHR43038:SF3">
    <property type="entry name" value="ABC TRANSPORTER G FAMILY MEMBER 20 ISOFORM X1"/>
    <property type="match status" value="1"/>
</dbReference>
<dbReference type="PANTHER" id="PTHR43038">
    <property type="entry name" value="ATP-BINDING CASSETTE, SUB-FAMILY H, MEMBER 1"/>
    <property type="match status" value="1"/>
</dbReference>
<dbReference type="Pfam" id="PF12698">
    <property type="entry name" value="ABC2_membrane_3"/>
    <property type="match status" value="1"/>
</dbReference>
<dbReference type="Pfam" id="PF00005">
    <property type="entry name" value="ABC_tran"/>
    <property type="match status" value="1"/>
</dbReference>
<dbReference type="SMART" id="SM00382">
    <property type="entry name" value="AAA"/>
    <property type="match status" value="1"/>
</dbReference>
<dbReference type="SUPFAM" id="SSF52540">
    <property type="entry name" value="P-loop containing nucleoside triphosphate hydrolases"/>
    <property type="match status" value="1"/>
</dbReference>
<dbReference type="PROSITE" id="PS00211">
    <property type="entry name" value="ABC_TRANSPORTER_1"/>
    <property type="match status" value="1"/>
</dbReference>
<dbReference type="PROSITE" id="PS50893">
    <property type="entry name" value="ABC_TRANSPORTER_2"/>
    <property type="match status" value="1"/>
</dbReference>
<organism>
    <name type="scientific">Dictyostelium discoideum</name>
    <name type="common">Social amoeba</name>
    <dbReference type="NCBI Taxonomy" id="44689"/>
    <lineage>
        <taxon>Eukaryota</taxon>
        <taxon>Amoebozoa</taxon>
        <taxon>Evosea</taxon>
        <taxon>Eumycetozoa</taxon>
        <taxon>Dictyostelia</taxon>
        <taxon>Dictyosteliales</taxon>
        <taxon>Dictyosteliaceae</taxon>
        <taxon>Dictyostelium</taxon>
    </lineage>
</organism>
<name>ABCGN_DICDI</name>
<comment type="subcellular location">
    <subcellularLocation>
        <location evidence="3">Membrane</location>
        <topology evidence="3">Multi-pass membrane protein</topology>
    </subcellularLocation>
</comment>
<comment type="similarity">
    <text evidence="3">Belongs to the ABC transporter superfamily. ABCG family.</text>
</comment>
<protein>
    <recommendedName>
        <fullName>ABC transporter G family member 23</fullName>
    </recommendedName>
    <alternativeName>
        <fullName>ABC transporter ABCG.23</fullName>
    </alternativeName>
</protein>
<sequence>MGDNIVINLNNVSRSYGNVKVIEKLNFTINKGTINSLIGSSGSGKTTILKTILGKLKQDDGIVQVFGKEPCGKGSEIPGSSVGYAPQDVCLYNEITIEETLSFFASIHRMPKDEYIKKRDSLVEILELPSLSKIISELSGGQQRRVSLATALIHSPKLLILDEPTVGVCPLVSSKIWEHLIFLTKNFGVTIIITTHYLQECRSCDNIFLLRNGRILESGPPNYLLSKYECSLLEDVYYKLCRGDEEISLQLIDSKNNEKINRDINTSIPLEFISNGANINNDDILISNTNKPIIKKDAKIYKERLSDFKNKLQIWFSHSITISIRKLTQMYRLKFPLVFEIISPSLLITLFFLAIGNVPHDLKFGIKNIDSGSLSGDFINALSDGNNIFNFIQINDTSNAIQMIESSDLWGLIDIPVNFTNGMINKLFNPLEKSFENSEMEIYMDLSNFQMNLMVDVQFQKAFNKIANDSGIKLLPTNFHAVYGDQNANFNWFLAPAMICIITYVHCMNFLSITFVREKNDGTRDRILLYGVSPVSNVLGHILAHIPILLVQFSIQLLIAVFAFGVPIKGNIVLIYLFFILINTVGMCQGILISLISKAEVDAVQLCLAIFICSLCMAGIIWPTEAIITFGWISNLVPTKWSGLALRGIMIKDLPFSHQHIWKSLIIIISYIIGTFSLIVISTPIGDRNFNFKKLFKRIKK</sequence>